<feature type="chain" id="PRO_0000115612" description="Small ribosomal subunit protein uS15">
    <location>
        <begin position="1"/>
        <end position="154"/>
    </location>
</feature>
<feature type="region of interest" description="Disordered" evidence="2">
    <location>
        <begin position="1"/>
        <end position="24"/>
    </location>
</feature>
<feature type="compositionally biased region" description="Basic residues" evidence="2">
    <location>
        <begin position="1"/>
        <end position="11"/>
    </location>
</feature>
<organism>
    <name type="scientific">Nanoarchaeum equitans (strain Kin4-M)</name>
    <dbReference type="NCBI Taxonomy" id="228908"/>
    <lineage>
        <taxon>Archaea</taxon>
        <taxon>Nanobdellota</taxon>
        <taxon>Candidatus Nanoarchaeia</taxon>
        <taxon>Nanoarchaeales</taxon>
        <taxon>Nanoarchaeaceae</taxon>
        <taxon>Nanoarchaeum</taxon>
    </lineage>
</organism>
<dbReference type="EMBL" id="AE017199">
    <property type="protein sequence ID" value="AAR39330.1"/>
    <property type="molecule type" value="Genomic_DNA"/>
</dbReference>
<dbReference type="SMR" id="Q74MB8"/>
<dbReference type="STRING" id="228908.NEQ487"/>
<dbReference type="EnsemblBacteria" id="AAR39330">
    <property type="protein sequence ID" value="AAR39330"/>
    <property type="gene ID" value="NEQ487"/>
</dbReference>
<dbReference type="KEGG" id="neq:NEQ487"/>
<dbReference type="PATRIC" id="fig|228908.8.peg.503"/>
<dbReference type="HOGENOM" id="CLU_090139_2_0_2"/>
<dbReference type="Proteomes" id="UP000000578">
    <property type="component" value="Chromosome"/>
</dbReference>
<dbReference type="GO" id="GO:0022627">
    <property type="term" value="C:cytosolic small ribosomal subunit"/>
    <property type="evidence" value="ECO:0007669"/>
    <property type="project" value="TreeGrafter"/>
</dbReference>
<dbReference type="GO" id="GO:0070181">
    <property type="term" value="F:small ribosomal subunit rRNA binding"/>
    <property type="evidence" value="ECO:0007669"/>
    <property type="project" value="TreeGrafter"/>
</dbReference>
<dbReference type="GO" id="GO:0003735">
    <property type="term" value="F:structural constituent of ribosome"/>
    <property type="evidence" value="ECO:0007669"/>
    <property type="project" value="InterPro"/>
</dbReference>
<dbReference type="GO" id="GO:0006412">
    <property type="term" value="P:translation"/>
    <property type="evidence" value="ECO:0007669"/>
    <property type="project" value="UniProtKB-UniRule"/>
</dbReference>
<dbReference type="CDD" id="cd00677">
    <property type="entry name" value="S15_NS1_EPRS_RNA-bind"/>
    <property type="match status" value="1"/>
</dbReference>
<dbReference type="Gene3D" id="4.10.860.130">
    <property type="match status" value="1"/>
</dbReference>
<dbReference type="Gene3D" id="1.10.287.10">
    <property type="entry name" value="S15/NS1, RNA-binding"/>
    <property type="match status" value="1"/>
</dbReference>
<dbReference type="HAMAP" id="MF_01343_A">
    <property type="entry name" value="Ribosomal_uS15_A"/>
    <property type="match status" value="1"/>
</dbReference>
<dbReference type="InterPro" id="IPR000589">
    <property type="entry name" value="Ribosomal_uS15"/>
</dbReference>
<dbReference type="InterPro" id="IPR023029">
    <property type="entry name" value="Ribosomal_uS15_arc_euk"/>
</dbReference>
<dbReference type="InterPro" id="IPR012606">
    <property type="entry name" value="Ribosomal_uS15_N"/>
</dbReference>
<dbReference type="InterPro" id="IPR009068">
    <property type="entry name" value="uS15_NS1_RNA-bd_sf"/>
</dbReference>
<dbReference type="NCBIfam" id="NF006331">
    <property type="entry name" value="PRK08561.1"/>
    <property type="match status" value="1"/>
</dbReference>
<dbReference type="PANTHER" id="PTHR11885">
    <property type="entry name" value="RIBOSOMAL PROTEIN S15P/S13E"/>
    <property type="match status" value="1"/>
</dbReference>
<dbReference type="PANTHER" id="PTHR11885:SF6">
    <property type="entry name" value="SMALL RIBOSOMAL SUBUNIT PROTEIN US15"/>
    <property type="match status" value="1"/>
</dbReference>
<dbReference type="Pfam" id="PF08069">
    <property type="entry name" value="Ribosomal_S13_N"/>
    <property type="match status" value="1"/>
</dbReference>
<dbReference type="Pfam" id="PF00312">
    <property type="entry name" value="Ribosomal_S15"/>
    <property type="match status" value="1"/>
</dbReference>
<dbReference type="SMART" id="SM01386">
    <property type="entry name" value="Ribosomal_S13_N"/>
    <property type="match status" value="1"/>
</dbReference>
<dbReference type="SMART" id="SM01387">
    <property type="entry name" value="Ribosomal_S15"/>
    <property type="match status" value="1"/>
</dbReference>
<dbReference type="SUPFAM" id="SSF47060">
    <property type="entry name" value="S15/NS1 RNA-binding domain"/>
    <property type="match status" value="1"/>
</dbReference>
<gene>
    <name evidence="1" type="primary">rps15</name>
    <name type="ordered locus">NEQ487</name>
</gene>
<protein>
    <recommendedName>
        <fullName evidence="1">Small ribosomal subunit protein uS15</fullName>
    </recommendedName>
    <alternativeName>
        <fullName evidence="3">30S ribosomal protein S15</fullName>
    </alternativeName>
</protein>
<sequence>MSRLHAHKRYHGQSGSKRPLRTTKPEWAPYDKEFVENKIIELAKQGYSPAMIGLILRDQYGIPDVRLYIGKSLQDFLEEKGLLPDIPWDLIYLLKRAYRVYKHIELNPRDTQAKRNYQLIISKIHRLAKYYKRKGVLPKDWKYSIEIARLYAVQ</sequence>
<accession>Q74MB8</accession>
<reference key="1">
    <citation type="journal article" date="2003" name="Proc. Natl. Acad. Sci. U.S.A.">
        <title>The genome of Nanoarchaeum equitans: insights into early archaeal evolution and derived parasitism.</title>
        <authorList>
            <person name="Waters E."/>
            <person name="Hohn M.J."/>
            <person name="Ahel I."/>
            <person name="Graham D.E."/>
            <person name="Adams M.D."/>
            <person name="Barnstead M."/>
            <person name="Beeson K.Y."/>
            <person name="Bibbs L."/>
            <person name="Bolanos R."/>
            <person name="Keller M."/>
            <person name="Kretz K."/>
            <person name="Lin X."/>
            <person name="Mathur E."/>
            <person name="Ni J."/>
            <person name="Podar M."/>
            <person name="Richardson T."/>
            <person name="Sutton G.G."/>
            <person name="Simon M."/>
            <person name="Soell D."/>
            <person name="Stetter K.O."/>
            <person name="Short J.M."/>
            <person name="Noorderwier M."/>
        </authorList>
    </citation>
    <scope>NUCLEOTIDE SEQUENCE [LARGE SCALE GENOMIC DNA]</scope>
    <source>
        <strain>Kin4-M</strain>
    </source>
</reference>
<proteinExistence type="inferred from homology"/>
<comment type="subunit">
    <text evidence="1">Part of the 30S ribosomal subunit.</text>
</comment>
<comment type="similarity">
    <text evidence="1">Belongs to the universal ribosomal protein uS15 family.</text>
</comment>
<name>RS15_NANEQ</name>
<evidence type="ECO:0000255" key="1">
    <source>
        <dbReference type="HAMAP-Rule" id="MF_01343"/>
    </source>
</evidence>
<evidence type="ECO:0000256" key="2">
    <source>
        <dbReference type="SAM" id="MobiDB-lite"/>
    </source>
</evidence>
<evidence type="ECO:0000305" key="3"/>
<keyword id="KW-1185">Reference proteome</keyword>
<keyword id="KW-0687">Ribonucleoprotein</keyword>
<keyword id="KW-0689">Ribosomal protein</keyword>